<proteinExistence type="evidence at protein level"/>
<gene>
    <name type="primary">RPL21</name>
    <name type="ORF">SOVF_056040</name>
</gene>
<dbReference type="EMBL" id="X56691">
    <property type="protein sequence ID" value="CAA40019.1"/>
    <property type="molecule type" value="mRNA"/>
</dbReference>
<dbReference type="EMBL" id="M57413">
    <property type="protein sequence ID" value="AAA34041.1"/>
    <property type="molecule type" value="mRNA"/>
</dbReference>
<dbReference type="EMBL" id="M64682">
    <property type="protein sequence ID" value="AAA74715.1"/>
    <property type="molecule type" value="Genomic_DNA"/>
</dbReference>
<dbReference type="EMBL" id="KQ139519">
    <property type="protein sequence ID" value="KNA20045.1"/>
    <property type="molecule type" value="Genomic_DNA"/>
</dbReference>
<dbReference type="PIR" id="A48103">
    <property type="entry name" value="A48103"/>
</dbReference>
<dbReference type="PDB" id="4V61">
    <property type="method" value="EM"/>
    <property type="resolution" value="9.40 A"/>
    <property type="chains" value="BT=1-256"/>
</dbReference>
<dbReference type="PDB" id="5H1S">
    <property type="method" value="EM"/>
    <property type="resolution" value="3.50 A"/>
    <property type="chains" value="T=56-256"/>
</dbReference>
<dbReference type="PDB" id="5MLC">
    <property type="method" value="EM"/>
    <property type="resolution" value="3.90 A"/>
    <property type="chains" value="T=1-256"/>
</dbReference>
<dbReference type="PDB" id="5MMI">
    <property type="method" value="EM"/>
    <property type="resolution" value="3.25 A"/>
    <property type="chains" value="S=1-256"/>
</dbReference>
<dbReference type="PDB" id="5MMM">
    <property type="method" value="EM"/>
    <property type="resolution" value="3.40 A"/>
    <property type="chains" value="S=1-256"/>
</dbReference>
<dbReference type="PDB" id="5X8P">
    <property type="method" value="EM"/>
    <property type="resolution" value="3.40 A"/>
    <property type="chains" value="S=56-256"/>
</dbReference>
<dbReference type="PDB" id="5X8T">
    <property type="method" value="EM"/>
    <property type="resolution" value="3.30 A"/>
    <property type="chains" value="S=56-256"/>
</dbReference>
<dbReference type="PDB" id="6ERI">
    <property type="method" value="EM"/>
    <property type="resolution" value="3.00 A"/>
    <property type="chains" value="AR=72-236"/>
</dbReference>
<dbReference type="PDBsum" id="4V61"/>
<dbReference type="PDBsum" id="5H1S"/>
<dbReference type="PDBsum" id="5MLC"/>
<dbReference type="PDBsum" id="5MMI"/>
<dbReference type="PDBsum" id="5MMM"/>
<dbReference type="PDBsum" id="5X8P"/>
<dbReference type="PDBsum" id="5X8T"/>
<dbReference type="PDBsum" id="6ERI"/>
<dbReference type="EMDB" id="EMD-3525"/>
<dbReference type="EMDB" id="EMD-3531"/>
<dbReference type="EMDB" id="EMD-3533"/>
<dbReference type="EMDB" id="EMD-3941"/>
<dbReference type="EMDB" id="EMD-6709"/>
<dbReference type="EMDB" id="EMD-6711"/>
<dbReference type="EMDB" id="EMD-9572"/>
<dbReference type="SMR" id="P24613"/>
<dbReference type="IntAct" id="P24613">
    <property type="interactions" value="1"/>
</dbReference>
<dbReference type="STRING" id="3562.P24613"/>
<dbReference type="Proteomes" id="UP001155700">
    <property type="component" value="Unplaced"/>
</dbReference>
<dbReference type="GO" id="GO:0009507">
    <property type="term" value="C:chloroplast"/>
    <property type="evidence" value="ECO:0007669"/>
    <property type="project" value="UniProtKB-SubCell"/>
</dbReference>
<dbReference type="GO" id="GO:1990904">
    <property type="term" value="C:ribonucleoprotein complex"/>
    <property type="evidence" value="ECO:0007669"/>
    <property type="project" value="UniProtKB-KW"/>
</dbReference>
<dbReference type="GO" id="GO:0005840">
    <property type="term" value="C:ribosome"/>
    <property type="evidence" value="ECO:0007669"/>
    <property type="project" value="UniProtKB-KW"/>
</dbReference>
<dbReference type="GO" id="GO:0019843">
    <property type="term" value="F:rRNA binding"/>
    <property type="evidence" value="ECO:0007669"/>
    <property type="project" value="UniProtKB-KW"/>
</dbReference>
<dbReference type="GO" id="GO:0003735">
    <property type="term" value="F:structural constituent of ribosome"/>
    <property type="evidence" value="ECO:0000318"/>
    <property type="project" value="GO_Central"/>
</dbReference>
<dbReference type="GO" id="GO:0006412">
    <property type="term" value="P:translation"/>
    <property type="evidence" value="ECO:0007669"/>
    <property type="project" value="InterPro"/>
</dbReference>
<dbReference type="HAMAP" id="MF_01363">
    <property type="entry name" value="Ribosomal_bL21"/>
    <property type="match status" value="1"/>
</dbReference>
<dbReference type="InterPro" id="IPR028909">
    <property type="entry name" value="bL21-like"/>
</dbReference>
<dbReference type="InterPro" id="IPR036164">
    <property type="entry name" value="bL21-like_sf"/>
</dbReference>
<dbReference type="InterPro" id="IPR001787">
    <property type="entry name" value="Ribosomal_bL21"/>
</dbReference>
<dbReference type="InterPro" id="IPR018258">
    <property type="entry name" value="Ribosomal_bL21_CS"/>
</dbReference>
<dbReference type="NCBIfam" id="TIGR00061">
    <property type="entry name" value="L21"/>
    <property type="match status" value="1"/>
</dbReference>
<dbReference type="PANTHER" id="PTHR21349">
    <property type="entry name" value="50S RIBOSOMAL PROTEIN L21"/>
    <property type="match status" value="1"/>
</dbReference>
<dbReference type="PANTHER" id="PTHR21349:SF8">
    <property type="entry name" value="LARGE RIBOSOMAL SUBUNIT PROTEIN BL21C"/>
    <property type="match status" value="1"/>
</dbReference>
<dbReference type="Pfam" id="PF00829">
    <property type="entry name" value="Ribosomal_L21p"/>
    <property type="match status" value="1"/>
</dbReference>
<dbReference type="SUPFAM" id="SSF141091">
    <property type="entry name" value="L21p-like"/>
    <property type="match status" value="1"/>
</dbReference>
<dbReference type="PROSITE" id="PS01169">
    <property type="entry name" value="RIBOSOMAL_L21"/>
    <property type="match status" value="1"/>
</dbReference>
<reference key="1">
    <citation type="journal article" date="1990" name="Curr. Genet.">
        <title>Hypothesis for the evolutionary origin of the chloroplast ribosomal protein L21 of spinach.</title>
        <authorList>
            <person name="Martin W."/>
            <person name="Lagrange T."/>
            <person name="Li Y.F."/>
            <person name="Bisanz-Seyer C."/>
            <person name="Mache R."/>
        </authorList>
    </citation>
    <scope>NUCLEOTIDE SEQUENCE [MRNA]</scope>
    <scope>PROTEIN SEQUENCE OF 56-67</scope>
</reference>
<reference key="2">
    <citation type="journal article" date="1990" name="J. Biol. Chem.">
        <title>A ribosomal protein is encoded in the chloroplast DNA in a lower plant but in the nucleus in angiosperms. Isolation of the spinach L21 protein and cDNA clone with transit and an unusual repeat sequence.</title>
        <authorList>
            <person name="Smooker P.M."/>
            <person name="Kruft V."/>
            <person name="Subramanian A.R."/>
        </authorList>
    </citation>
    <scope>NUCLEOTIDE SEQUENCE [MRNA]</scope>
    <scope>PROTEIN SEQUENCE OF 56-75</scope>
    <source>
        <strain>cv. Alwaro</strain>
    </source>
</reference>
<reference key="3">
    <citation type="journal article" date="1993" name="Mol. Cell. Biol.">
        <title>Structure and expression of the nuclear gene coding for the chloroplast ribosomal protein L21: developmental regulation of a housekeeping gene by alternative promoters.</title>
        <authorList>
            <person name="Lagrange T."/>
            <person name="Franzetti B."/>
            <person name="Axelos M."/>
            <person name="Mache R."/>
            <person name="Lerbs-Mache S."/>
        </authorList>
    </citation>
    <scope>NUCLEOTIDE SEQUENCE [GENOMIC DNA]</scope>
    <source>
        <strain>cv. Geant d'hiver</strain>
    </source>
</reference>
<reference key="4">
    <citation type="journal article" date="2014" name="Nature">
        <title>The genome of the recently domesticated crop plant sugar beet (Beta vulgaris).</title>
        <authorList>
            <person name="Dohm J.C."/>
            <person name="Minoche A.E."/>
            <person name="Holtgraewe D."/>
            <person name="Capella-Gutierrez S."/>
            <person name="Zakrzewski F."/>
            <person name="Tafer H."/>
            <person name="Rupp O."/>
            <person name="Soerensen T.R."/>
            <person name="Stracke R."/>
            <person name="Reinhardt R."/>
            <person name="Goesmann A."/>
            <person name="Kraft T."/>
            <person name="Schulz B."/>
            <person name="Stadler P.F."/>
            <person name="Schmidt T."/>
            <person name="Gabaldon T."/>
            <person name="Lehrach H."/>
            <person name="Weisshaar B."/>
            <person name="Himmelbauer H."/>
        </authorList>
    </citation>
    <scope>NUCLEOTIDE SEQUENCE [LARGE SCALE GENOMIC DNA]</scope>
    <source>
        <strain>cv. Viroflay</strain>
        <tissue>Leaf</tissue>
    </source>
</reference>
<reference key="5">
    <citation type="journal article" date="2000" name="J. Biol. Chem.">
        <title>The plastid ribosomal proteins. Identification of all the proteins in the 50S subunit of an organelle ribosome (chloroplast).</title>
        <authorList>
            <person name="Yamaguchi K."/>
            <person name="Subramanian A.R."/>
        </authorList>
    </citation>
    <scope>PROTEIN SEQUENCE OF 56-61</scope>
    <scope>SUBUNIT</scope>
    <scope>SUBCELLULAR LOCATION</scope>
    <scope>MASS SPECTROMETRY</scope>
    <source>
        <strain>cv. Alwaro</strain>
        <tissue>Leaf</tissue>
    </source>
</reference>
<reference key="6">
    <citation type="journal article" date="2007" name="Proc. Natl. Acad. Sci. U.S.A.">
        <title>Cryo-EM study of the spinach chloroplast ribosome reveals the structural and functional roles of plastid-specific ribosomal proteins.</title>
        <authorList>
            <person name="Sharma M.R."/>
            <person name="Wilson D.N."/>
            <person name="Datta P.P."/>
            <person name="Barat C."/>
            <person name="Schluenzen F."/>
            <person name="Fucini P."/>
            <person name="Agrawal R.K."/>
        </authorList>
    </citation>
    <scope>STRUCTURE BY ELECTRON MICROSCOPY (9.4 ANGSTROMS)</scope>
</reference>
<reference key="7">
    <citation type="journal article" date="2016" name="Sci. Rep.">
        <title>Cryo-EM structure of the large subunit of the spinach chloroplast ribosome.</title>
        <authorList>
            <person name="Ahmed T."/>
            <person name="Yin Z."/>
            <person name="Bhushan S."/>
        </authorList>
    </citation>
    <scope>STRUCTURE BY ELECTRON MICROSCOPY (3.50 ANGSTROMS)</scope>
</reference>
<reference key="8">
    <citation type="journal article" date="2017" name="EMBO J.">
        <title>The complete structure of the chloroplast 70S ribosome in complex with translation factor pY.</title>
        <authorList>
            <person name="Bieri P."/>
            <person name="Leibundgut M."/>
            <person name="Saurer M."/>
            <person name="Boehringer D."/>
            <person name="Ban N."/>
        </authorList>
    </citation>
    <scope>STRUCTURE BY ELECTRON MICROSCOPY (3.25 ANGSTROMS)</scope>
    <scope>SUBUNIT</scope>
    <scope>SUBCELLULAR LOCATION</scope>
</reference>
<comment type="function">
    <text evidence="8 9">Component of the chloroplast ribosome (chloro-ribosome), a dedicated translation machinery responsible for the synthesis of chloroplast genome-encoded proteins, including proteins of the transcription and translation machinery and components of the photosynthetic apparatus.</text>
</comment>
<comment type="subunit">
    <text evidence="1 4">Component of the chloroplast large ribosomal subunit (LSU). Mature 70S chloroplast ribosomes of higher plants consist of a small (30S) and a large (50S) subunit. The 30S small subunit contains 1 molecule of ribosomal RNA (16S rRNA) and 24 different proteins. The 50S large subunit contains 3 rRNA molecules (23S, 5S and 4.5S rRNA) and 33 different proteins.</text>
</comment>
<comment type="subcellular location">
    <subcellularLocation>
        <location evidence="1 4">Plastid</location>
        <location evidence="1 4">Chloroplast</location>
    </subcellularLocation>
</comment>
<comment type="mass spectrometry"/>
<comment type="similarity">
    <text evidence="7">Belongs to the bacterial ribosomal protein bL21 family.</text>
</comment>
<protein>
    <recommendedName>
        <fullName evidence="6">Large ribosomal subunit protein bL21c</fullName>
    </recommendedName>
    <alternativeName>
        <fullName evidence="5">50S ribosomal protein L21, chloroplastic</fullName>
    </alternativeName>
    <alternativeName>
        <fullName>CL21</fullName>
    </alternativeName>
    <alternativeName>
        <fullName>CS-L7</fullName>
    </alternativeName>
</protein>
<accession>P24613</accession>
<accession>A0A0K9RKM9</accession>
<keyword id="KW-0002">3D-structure</keyword>
<keyword id="KW-0150">Chloroplast</keyword>
<keyword id="KW-0903">Direct protein sequencing</keyword>
<keyword id="KW-0934">Plastid</keyword>
<keyword id="KW-1185">Reference proteome</keyword>
<keyword id="KW-0687">Ribonucleoprotein</keyword>
<keyword id="KW-0689">Ribosomal protein</keyword>
<keyword id="KW-0694">RNA-binding</keyword>
<keyword id="KW-0699">rRNA-binding</keyword>
<keyword id="KW-0809">Transit peptide</keyword>
<feature type="transit peptide" description="Chloroplast" evidence="1 2 3">
    <location>
        <begin position="1"/>
        <end position="55"/>
    </location>
</feature>
<feature type="chain" id="PRO_0000030481" description="Large ribosomal subunit protein bL21c">
    <location>
        <begin position="56"/>
        <end position="256"/>
    </location>
</feature>
<feature type="sequence conflict" description="In Ref. 4; KNA20045." evidence="7" ref="4">
    <original>EAVPV</original>
    <variation>VPV</variation>
    <location>
        <begin position="252"/>
        <end position="256"/>
    </location>
</feature>
<feature type="helix" evidence="10">
    <location>
        <begin position="69"/>
        <end position="76"/>
    </location>
</feature>
<feature type="turn" evidence="10">
    <location>
        <begin position="77"/>
        <end position="79"/>
    </location>
</feature>
<feature type="strand" evidence="10">
    <location>
        <begin position="80"/>
        <end position="82"/>
    </location>
</feature>
<feature type="helix" evidence="10">
    <location>
        <begin position="85"/>
        <end position="88"/>
    </location>
</feature>
<feature type="helix" evidence="10">
    <location>
        <begin position="101"/>
        <end position="110"/>
    </location>
</feature>
<feature type="strand" evidence="10">
    <location>
        <begin position="124"/>
        <end position="129"/>
    </location>
</feature>
<feature type="strand" evidence="10">
    <location>
        <begin position="132"/>
        <end position="136"/>
    </location>
</feature>
<feature type="strand" evidence="10">
    <location>
        <begin position="141"/>
        <end position="145"/>
    </location>
</feature>
<feature type="strand" evidence="10">
    <location>
        <begin position="155"/>
        <end position="158"/>
    </location>
</feature>
<feature type="strand" evidence="10">
    <location>
        <begin position="161"/>
        <end position="165"/>
    </location>
</feature>
<feature type="strand" evidence="10">
    <location>
        <begin position="170"/>
        <end position="172"/>
    </location>
</feature>
<feature type="strand" evidence="10">
    <location>
        <begin position="174"/>
        <end position="176"/>
    </location>
</feature>
<feature type="strand" evidence="10">
    <location>
        <begin position="181"/>
        <end position="191"/>
    </location>
</feature>
<feature type="strand" evidence="10">
    <location>
        <begin position="195"/>
        <end position="201"/>
    </location>
</feature>
<feature type="turn" evidence="10">
    <location>
        <begin position="202"/>
        <end position="205"/>
    </location>
</feature>
<feature type="strand" evidence="10">
    <location>
        <begin position="206"/>
        <end position="212"/>
    </location>
</feature>
<feature type="strand" evidence="10">
    <location>
        <begin position="215"/>
        <end position="226"/>
    </location>
</feature>
<name>RK21_SPIOL</name>
<sequence>MASATLAFSCSSLCATLKLPQNLNPLLLNVPPLSKPFSGVVSPPSLSRLSLLPVAAKRRRFQEIPEELKAEFEEFQRPPNQKPQLSDVLPDDFQAPEPGTPEYNDIINQFLPKKGPPPPREEIFAVVVIGSRQYIVIPGRWIYTQRLKGATVNDKIVLNKVLLVGTKASTYIGTPIVTNAAVHAVVEEQLLDDKVIVFKYKKKKNYRRNIGHRQPITRIKITGITGYEDYPASTLEAEVEAKEEAEAEAEAEAVPV</sequence>
<organism>
    <name type="scientific">Spinacia oleracea</name>
    <name type="common">Spinach</name>
    <dbReference type="NCBI Taxonomy" id="3562"/>
    <lineage>
        <taxon>Eukaryota</taxon>
        <taxon>Viridiplantae</taxon>
        <taxon>Streptophyta</taxon>
        <taxon>Embryophyta</taxon>
        <taxon>Tracheophyta</taxon>
        <taxon>Spermatophyta</taxon>
        <taxon>Magnoliopsida</taxon>
        <taxon>eudicotyledons</taxon>
        <taxon>Gunneridae</taxon>
        <taxon>Pentapetalae</taxon>
        <taxon>Caryophyllales</taxon>
        <taxon>Chenopodiaceae</taxon>
        <taxon>Chenopodioideae</taxon>
        <taxon>Anserineae</taxon>
        <taxon>Spinacia</taxon>
    </lineage>
</organism>
<evidence type="ECO:0000269" key="1">
    <source>
    </source>
</evidence>
<evidence type="ECO:0000269" key="2">
    <source>
    </source>
</evidence>
<evidence type="ECO:0000269" key="3">
    <source>
    </source>
</evidence>
<evidence type="ECO:0000269" key="4">
    <source>
    </source>
</evidence>
<evidence type="ECO:0000303" key="5">
    <source>
    </source>
</evidence>
<evidence type="ECO:0000303" key="6">
    <source>
    </source>
</evidence>
<evidence type="ECO:0000305" key="7"/>
<evidence type="ECO:0000305" key="8">
    <source>
    </source>
</evidence>
<evidence type="ECO:0000305" key="9">
    <source>
    </source>
</evidence>
<evidence type="ECO:0007829" key="10">
    <source>
        <dbReference type="PDB" id="5MMI"/>
    </source>
</evidence>